<protein>
    <recommendedName>
        <fullName evidence="1">Probable cyclic pyranopterin monophosphate synthase</fullName>
        <ecNumber evidence="1">4.6.1.17</ecNumber>
    </recommendedName>
    <alternativeName>
        <fullName evidence="1">Molybdenum cofactor biosynthesis protein C</fullName>
    </alternativeName>
</protein>
<proteinExistence type="inferred from homology"/>
<evidence type="ECO:0000255" key="1">
    <source>
        <dbReference type="HAMAP-Rule" id="MF_01224"/>
    </source>
</evidence>
<gene>
    <name evidence="1" type="primary">moaC</name>
    <name type="ordered locus">Saci_0905</name>
</gene>
<comment type="function">
    <text evidence="1">Catalyzes the conversion of (8S)-3',8-cyclo-7,8-dihydroguanosine 5'-triphosphate to cyclic pyranopterin monophosphate (cPMP).</text>
</comment>
<comment type="catalytic activity">
    <reaction evidence="1">
        <text>(8S)-3',8-cyclo-7,8-dihydroguanosine 5'-triphosphate = cyclic pyranopterin phosphate + diphosphate</text>
        <dbReference type="Rhea" id="RHEA:49580"/>
        <dbReference type="ChEBI" id="CHEBI:33019"/>
        <dbReference type="ChEBI" id="CHEBI:59648"/>
        <dbReference type="ChEBI" id="CHEBI:131766"/>
        <dbReference type="EC" id="4.6.1.17"/>
    </reaction>
</comment>
<comment type="pathway">
    <text evidence="1">Cofactor biosynthesis; molybdopterin biosynthesis.</text>
</comment>
<comment type="subunit">
    <text evidence="1">Homohexamer; trimer of dimers.</text>
</comment>
<comment type="similarity">
    <text evidence="1">Belongs to the MoaC family.</text>
</comment>
<name>MOAC_SULAC</name>
<reference key="1">
    <citation type="journal article" date="2005" name="J. Bacteriol.">
        <title>The genome of Sulfolobus acidocaldarius, a model organism of the Crenarchaeota.</title>
        <authorList>
            <person name="Chen L."/>
            <person name="Bruegger K."/>
            <person name="Skovgaard M."/>
            <person name="Redder P."/>
            <person name="She Q."/>
            <person name="Torarinsson E."/>
            <person name="Greve B."/>
            <person name="Awayez M."/>
            <person name="Zibat A."/>
            <person name="Klenk H.-P."/>
            <person name="Garrett R.A."/>
        </authorList>
    </citation>
    <scope>NUCLEOTIDE SEQUENCE [LARGE SCALE GENOMIC DNA]</scope>
    <source>
        <strain>ATCC 33909 / DSM 639 / JCM 8929 / NBRC 15157 / NCIMB 11770</strain>
    </source>
</reference>
<dbReference type="EC" id="4.6.1.17" evidence="1"/>
<dbReference type="EMBL" id="CP000077">
    <property type="protein sequence ID" value="AAY80268.1"/>
    <property type="molecule type" value="Genomic_DNA"/>
</dbReference>
<dbReference type="SMR" id="Q4JAB2"/>
<dbReference type="STRING" id="330779.Saci_0905"/>
<dbReference type="KEGG" id="sai:Saci_0905"/>
<dbReference type="PATRIC" id="fig|330779.12.peg.865"/>
<dbReference type="eggNOG" id="arCOG01530">
    <property type="taxonomic scope" value="Archaea"/>
</dbReference>
<dbReference type="HOGENOM" id="CLU_074693_1_2_2"/>
<dbReference type="UniPathway" id="UPA00344"/>
<dbReference type="Proteomes" id="UP000001018">
    <property type="component" value="Chromosome"/>
</dbReference>
<dbReference type="GO" id="GO:0061799">
    <property type="term" value="F:cyclic pyranopterin monophosphate synthase activity"/>
    <property type="evidence" value="ECO:0007669"/>
    <property type="project" value="UniProtKB-UniRule"/>
</dbReference>
<dbReference type="GO" id="GO:0006777">
    <property type="term" value="P:Mo-molybdopterin cofactor biosynthetic process"/>
    <property type="evidence" value="ECO:0007669"/>
    <property type="project" value="UniProtKB-UniRule"/>
</dbReference>
<dbReference type="CDD" id="cd01419">
    <property type="entry name" value="MoaC_A"/>
    <property type="match status" value="1"/>
</dbReference>
<dbReference type="Gene3D" id="3.30.70.640">
    <property type="entry name" value="Molybdopterin cofactor biosynthesis C (MoaC) domain"/>
    <property type="match status" value="1"/>
</dbReference>
<dbReference type="HAMAP" id="MF_01224_A">
    <property type="entry name" value="MoaC_A"/>
    <property type="match status" value="1"/>
</dbReference>
<dbReference type="InterPro" id="IPR023047">
    <property type="entry name" value="Mo_CF_biosynth-C_arc"/>
</dbReference>
<dbReference type="InterPro" id="IPR023045">
    <property type="entry name" value="MoaC"/>
</dbReference>
<dbReference type="InterPro" id="IPR036522">
    <property type="entry name" value="MoaC_sf"/>
</dbReference>
<dbReference type="InterPro" id="IPR050105">
    <property type="entry name" value="MoCo_biosynth_MoaA/MoaC"/>
</dbReference>
<dbReference type="InterPro" id="IPR002820">
    <property type="entry name" value="Mopterin_CF_biosynth-C_dom"/>
</dbReference>
<dbReference type="NCBIfam" id="TIGR00581">
    <property type="entry name" value="moaC"/>
    <property type="match status" value="1"/>
</dbReference>
<dbReference type="NCBIfam" id="NF008999">
    <property type="entry name" value="PRK12343.1"/>
    <property type="match status" value="1"/>
</dbReference>
<dbReference type="PANTHER" id="PTHR22960">
    <property type="entry name" value="MOLYBDOPTERIN COFACTOR SYNTHESIS PROTEIN A"/>
    <property type="match status" value="1"/>
</dbReference>
<dbReference type="Pfam" id="PF01967">
    <property type="entry name" value="MoaC"/>
    <property type="match status" value="1"/>
</dbReference>
<dbReference type="SUPFAM" id="SSF55040">
    <property type="entry name" value="Molybdenum cofactor biosynthesis protein C, MoaC"/>
    <property type="match status" value="1"/>
</dbReference>
<sequence>MIDISGKDIVLREAIAEGFIKLKKDTIEKITKREIEKGDVIATAKVAGILAAKKTHELLPMCHPIPLEYINVEIEIENDGLKVVSTVRAHYRTGVEMEALTATSIALLTIWDMVKKYEKDEEGQYPLTEISKIRVVSKIKSYG</sequence>
<organism>
    <name type="scientific">Sulfolobus acidocaldarius (strain ATCC 33909 / DSM 639 / JCM 8929 / NBRC 15157 / NCIMB 11770)</name>
    <dbReference type="NCBI Taxonomy" id="330779"/>
    <lineage>
        <taxon>Archaea</taxon>
        <taxon>Thermoproteota</taxon>
        <taxon>Thermoprotei</taxon>
        <taxon>Sulfolobales</taxon>
        <taxon>Sulfolobaceae</taxon>
        <taxon>Sulfolobus</taxon>
    </lineage>
</organism>
<feature type="chain" id="PRO_0000097863" description="Probable cyclic pyranopterin monophosphate synthase">
    <location>
        <begin position="1"/>
        <end position="143"/>
    </location>
</feature>
<feature type="active site" evidence="1">
    <location>
        <position position="112"/>
    </location>
</feature>
<feature type="binding site" evidence="1">
    <location>
        <begin position="61"/>
        <end position="63"/>
    </location>
    <ligand>
        <name>substrate</name>
    </ligand>
</feature>
<feature type="binding site" evidence="1">
    <location>
        <begin position="97"/>
        <end position="98"/>
    </location>
    <ligand>
        <name>substrate</name>
    </ligand>
</feature>
<accession>Q4JAB2</accession>
<keyword id="KW-0456">Lyase</keyword>
<keyword id="KW-0501">Molybdenum cofactor biosynthesis</keyword>
<keyword id="KW-1185">Reference proteome</keyword>